<sequence length="340" mass="38994">MIFIDACFKKPTPYTPIWMMRQAGRYLPEYMEVRKQAGDFLSLCKDYKKASEVSLQPIDILDVDAAIIFSDILVVPLEMGMNLRFEKGEGPIFDNPISTLEDLEKLDDQNAHKKLNYVYDALKLTREKLSQNKALIGFCGSPWTIATYMIEGSGSKNYAKCKKMLYQNPELLHKILNKLTQVLKLYLEEQIKAGANAIQIFDSWASALEYDKFFEFSFNYMLEISNFIKSKYPNIPVILFPKGISGYLDRIDGNFDVFGVDWSTPLDLARDKLSHKYTLQGNMEPCRLYDKNAIKEGVEKILKTMQNKAHIFNLGHGILPDIPVENAKYFIKLVQESSAK</sequence>
<gene>
    <name evidence="1" type="primary">hemE</name>
    <name type="ordered locus">CJJ81176_1258</name>
</gene>
<organism>
    <name type="scientific">Campylobacter jejuni subsp. jejuni serotype O:23/36 (strain 81-176)</name>
    <dbReference type="NCBI Taxonomy" id="354242"/>
    <lineage>
        <taxon>Bacteria</taxon>
        <taxon>Pseudomonadati</taxon>
        <taxon>Campylobacterota</taxon>
        <taxon>Epsilonproteobacteria</taxon>
        <taxon>Campylobacterales</taxon>
        <taxon>Campylobacteraceae</taxon>
        <taxon>Campylobacter</taxon>
    </lineage>
</organism>
<evidence type="ECO:0000255" key="1">
    <source>
        <dbReference type="HAMAP-Rule" id="MF_00218"/>
    </source>
</evidence>
<name>DCUP_CAMJJ</name>
<comment type="function">
    <text evidence="1">Catalyzes the decarboxylation of four acetate groups of uroporphyrinogen-III to yield coproporphyrinogen-III.</text>
</comment>
<comment type="catalytic activity">
    <reaction evidence="1">
        <text>uroporphyrinogen III + 4 H(+) = coproporphyrinogen III + 4 CO2</text>
        <dbReference type="Rhea" id="RHEA:19865"/>
        <dbReference type="ChEBI" id="CHEBI:15378"/>
        <dbReference type="ChEBI" id="CHEBI:16526"/>
        <dbReference type="ChEBI" id="CHEBI:57308"/>
        <dbReference type="ChEBI" id="CHEBI:57309"/>
        <dbReference type="EC" id="4.1.1.37"/>
    </reaction>
</comment>
<comment type="pathway">
    <text evidence="1">Porphyrin-containing compound metabolism; protoporphyrin-IX biosynthesis; coproporphyrinogen-III from 5-aminolevulinate: step 4/4.</text>
</comment>
<comment type="subunit">
    <text evidence="1">Homodimer.</text>
</comment>
<comment type="subcellular location">
    <subcellularLocation>
        <location evidence="1">Cytoplasm</location>
    </subcellularLocation>
</comment>
<comment type="similarity">
    <text evidence="1">Belongs to the uroporphyrinogen decarboxylase family.</text>
</comment>
<feature type="chain" id="PRO_1000023892" description="Uroporphyrinogen decarboxylase">
    <location>
        <begin position="1"/>
        <end position="340"/>
    </location>
</feature>
<feature type="binding site" evidence="1">
    <location>
        <begin position="21"/>
        <end position="25"/>
    </location>
    <ligand>
        <name>substrate</name>
    </ligand>
</feature>
<feature type="binding site" evidence="1">
    <location>
        <position position="71"/>
    </location>
    <ligand>
        <name>substrate</name>
    </ligand>
</feature>
<feature type="binding site" evidence="1">
    <location>
        <position position="148"/>
    </location>
    <ligand>
        <name>substrate</name>
    </ligand>
</feature>
<feature type="binding site" evidence="1">
    <location>
        <position position="203"/>
    </location>
    <ligand>
        <name>substrate</name>
    </ligand>
</feature>
<feature type="binding site" evidence="1">
    <location>
        <position position="316"/>
    </location>
    <ligand>
        <name>substrate</name>
    </ligand>
</feature>
<feature type="site" description="Transition state stabilizer" evidence="1">
    <location>
        <position position="71"/>
    </location>
</feature>
<dbReference type="EC" id="4.1.1.37" evidence="1"/>
<dbReference type="EMBL" id="CP000538">
    <property type="protein sequence ID" value="EAQ72857.1"/>
    <property type="molecule type" value="Genomic_DNA"/>
</dbReference>
<dbReference type="RefSeq" id="WP_002856507.1">
    <property type="nucleotide sequence ID" value="NC_008787.1"/>
</dbReference>
<dbReference type="SMR" id="A1W0M7"/>
<dbReference type="KEGG" id="cjj:CJJ81176_1258"/>
<dbReference type="eggNOG" id="COG0407">
    <property type="taxonomic scope" value="Bacteria"/>
</dbReference>
<dbReference type="HOGENOM" id="CLU_040933_0_0_7"/>
<dbReference type="UniPathway" id="UPA00251">
    <property type="reaction ID" value="UER00321"/>
</dbReference>
<dbReference type="Proteomes" id="UP000000646">
    <property type="component" value="Chromosome"/>
</dbReference>
<dbReference type="GO" id="GO:0005829">
    <property type="term" value="C:cytosol"/>
    <property type="evidence" value="ECO:0007669"/>
    <property type="project" value="TreeGrafter"/>
</dbReference>
<dbReference type="GO" id="GO:0004853">
    <property type="term" value="F:uroporphyrinogen decarboxylase activity"/>
    <property type="evidence" value="ECO:0007669"/>
    <property type="project" value="UniProtKB-UniRule"/>
</dbReference>
<dbReference type="GO" id="GO:0019353">
    <property type="term" value="P:protoporphyrinogen IX biosynthetic process from glutamate"/>
    <property type="evidence" value="ECO:0007669"/>
    <property type="project" value="TreeGrafter"/>
</dbReference>
<dbReference type="CDD" id="cd00717">
    <property type="entry name" value="URO-D"/>
    <property type="match status" value="1"/>
</dbReference>
<dbReference type="FunFam" id="3.20.20.210:FF:000007">
    <property type="entry name" value="Uroporphyrinogen decarboxylase"/>
    <property type="match status" value="1"/>
</dbReference>
<dbReference type="Gene3D" id="3.20.20.210">
    <property type="match status" value="1"/>
</dbReference>
<dbReference type="HAMAP" id="MF_00218">
    <property type="entry name" value="URO_D"/>
    <property type="match status" value="1"/>
</dbReference>
<dbReference type="InterPro" id="IPR038071">
    <property type="entry name" value="UROD/MetE-like_sf"/>
</dbReference>
<dbReference type="InterPro" id="IPR006361">
    <property type="entry name" value="Uroporphyrinogen_deCO2ase_HemE"/>
</dbReference>
<dbReference type="InterPro" id="IPR000257">
    <property type="entry name" value="Uroporphyrinogen_deCOase"/>
</dbReference>
<dbReference type="NCBIfam" id="TIGR01464">
    <property type="entry name" value="hemE"/>
    <property type="match status" value="1"/>
</dbReference>
<dbReference type="PANTHER" id="PTHR21091">
    <property type="entry name" value="METHYLTETRAHYDROFOLATE:HOMOCYSTEINE METHYLTRANSFERASE RELATED"/>
    <property type="match status" value="1"/>
</dbReference>
<dbReference type="PANTHER" id="PTHR21091:SF169">
    <property type="entry name" value="UROPORPHYRINOGEN DECARBOXYLASE"/>
    <property type="match status" value="1"/>
</dbReference>
<dbReference type="Pfam" id="PF01208">
    <property type="entry name" value="URO-D"/>
    <property type="match status" value="1"/>
</dbReference>
<dbReference type="SUPFAM" id="SSF51726">
    <property type="entry name" value="UROD/MetE-like"/>
    <property type="match status" value="1"/>
</dbReference>
<dbReference type="PROSITE" id="PS00906">
    <property type="entry name" value="UROD_1"/>
    <property type="match status" value="1"/>
</dbReference>
<dbReference type="PROSITE" id="PS00907">
    <property type="entry name" value="UROD_2"/>
    <property type="match status" value="1"/>
</dbReference>
<keyword id="KW-0963">Cytoplasm</keyword>
<keyword id="KW-0210">Decarboxylase</keyword>
<keyword id="KW-0456">Lyase</keyword>
<keyword id="KW-0627">Porphyrin biosynthesis</keyword>
<proteinExistence type="inferred from homology"/>
<protein>
    <recommendedName>
        <fullName evidence="1">Uroporphyrinogen decarboxylase</fullName>
        <shortName evidence="1">UPD</shortName>
        <shortName evidence="1">URO-D</shortName>
        <ecNumber evidence="1">4.1.1.37</ecNumber>
    </recommendedName>
</protein>
<accession>A1W0M7</accession>
<reference key="1">
    <citation type="submission" date="2006-12" db="EMBL/GenBank/DDBJ databases">
        <authorList>
            <person name="Fouts D.E."/>
            <person name="Nelson K.E."/>
            <person name="Sebastian Y."/>
        </authorList>
    </citation>
    <scope>NUCLEOTIDE SEQUENCE [LARGE SCALE GENOMIC DNA]</scope>
    <source>
        <strain>81-176</strain>
    </source>
</reference>